<sequence length="123" mass="13966">MIVGIGIDIVYIPRILNLWKKFGNKFLKKVFSQEEIKDSNKYTSCEGKARHFAKRFAAKEAYVKALGTGFGKSIKMSDITTYNTLYGKPQITVKKSNIDYKAELSLSDDTDYAIAFIILHKES</sequence>
<keyword id="KW-0963">Cytoplasm</keyword>
<keyword id="KW-0275">Fatty acid biosynthesis</keyword>
<keyword id="KW-0276">Fatty acid metabolism</keyword>
<keyword id="KW-0444">Lipid biosynthesis</keyword>
<keyword id="KW-0443">Lipid metabolism</keyword>
<keyword id="KW-0460">Magnesium</keyword>
<keyword id="KW-0479">Metal-binding</keyword>
<keyword id="KW-0808">Transferase</keyword>
<dbReference type="EC" id="2.7.8.7" evidence="1"/>
<dbReference type="EMBL" id="CR767821">
    <property type="protein sequence ID" value="CAH58063.1"/>
    <property type="molecule type" value="Genomic_DNA"/>
</dbReference>
<dbReference type="EMBL" id="CR925678">
    <property type="protein sequence ID" value="CAI26844.1"/>
    <property type="molecule type" value="Genomic_DNA"/>
</dbReference>
<dbReference type="RefSeq" id="WP_011155024.1">
    <property type="nucleotide sequence ID" value="NC_005295.2"/>
</dbReference>
<dbReference type="SMR" id="Q5HBI7"/>
<dbReference type="GeneID" id="33057816"/>
<dbReference type="KEGG" id="eru:Erum3430"/>
<dbReference type="KEGG" id="erw:ERWE_CDS_03500"/>
<dbReference type="eggNOG" id="COG0736">
    <property type="taxonomic scope" value="Bacteria"/>
</dbReference>
<dbReference type="HOGENOM" id="CLU_089696_1_2_5"/>
<dbReference type="Proteomes" id="UP000001021">
    <property type="component" value="Chromosome"/>
</dbReference>
<dbReference type="GO" id="GO:0005829">
    <property type="term" value="C:cytosol"/>
    <property type="evidence" value="ECO:0007669"/>
    <property type="project" value="TreeGrafter"/>
</dbReference>
<dbReference type="GO" id="GO:0008897">
    <property type="term" value="F:holo-[acyl-carrier-protein] synthase activity"/>
    <property type="evidence" value="ECO:0007669"/>
    <property type="project" value="UniProtKB-UniRule"/>
</dbReference>
<dbReference type="GO" id="GO:0000287">
    <property type="term" value="F:magnesium ion binding"/>
    <property type="evidence" value="ECO:0007669"/>
    <property type="project" value="UniProtKB-UniRule"/>
</dbReference>
<dbReference type="GO" id="GO:0006633">
    <property type="term" value="P:fatty acid biosynthetic process"/>
    <property type="evidence" value="ECO:0007669"/>
    <property type="project" value="UniProtKB-UniRule"/>
</dbReference>
<dbReference type="GO" id="GO:0019878">
    <property type="term" value="P:lysine biosynthetic process via aminoadipic acid"/>
    <property type="evidence" value="ECO:0007669"/>
    <property type="project" value="TreeGrafter"/>
</dbReference>
<dbReference type="Gene3D" id="3.90.470.20">
    <property type="entry name" value="4'-phosphopantetheinyl transferase domain"/>
    <property type="match status" value="1"/>
</dbReference>
<dbReference type="HAMAP" id="MF_00101">
    <property type="entry name" value="AcpS"/>
    <property type="match status" value="1"/>
</dbReference>
<dbReference type="InterPro" id="IPR008278">
    <property type="entry name" value="4-PPantetheinyl_Trfase_dom"/>
</dbReference>
<dbReference type="InterPro" id="IPR037143">
    <property type="entry name" value="4-PPantetheinyl_Trfase_dom_sf"/>
</dbReference>
<dbReference type="InterPro" id="IPR002582">
    <property type="entry name" value="ACPS"/>
</dbReference>
<dbReference type="InterPro" id="IPR050559">
    <property type="entry name" value="P-Pant_transferase_sf"/>
</dbReference>
<dbReference type="InterPro" id="IPR004568">
    <property type="entry name" value="Ppantetheine-prot_Trfase_dom"/>
</dbReference>
<dbReference type="NCBIfam" id="TIGR00516">
    <property type="entry name" value="acpS"/>
    <property type="match status" value="1"/>
</dbReference>
<dbReference type="NCBIfam" id="TIGR00556">
    <property type="entry name" value="pantethn_trn"/>
    <property type="match status" value="1"/>
</dbReference>
<dbReference type="NCBIfam" id="NF011253">
    <property type="entry name" value="PRK14659.1"/>
    <property type="match status" value="1"/>
</dbReference>
<dbReference type="PANTHER" id="PTHR12215:SF10">
    <property type="entry name" value="L-AMINOADIPATE-SEMIALDEHYDE DEHYDROGENASE-PHOSPHOPANTETHEINYL TRANSFERASE"/>
    <property type="match status" value="1"/>
</dbReference>
<dbReference type="PANTHER" id="PTHR12215">
    <property type="entry name" value="PHOSPHOPANTETHEINE TRANSFERASE"/>
    <property type="match status" value="1"/>
</dbReference>
<dbReference type="Pfam" id="PF01648">
    <property type="entry name" value="ACPS"/>
    <property type="match status" value="1"/>
</dbReference>
<dbReference type="SUPFAM" id="SSF56214">
    <property type="entry name" value="4'-phosphopantetheinyl transferase"/>
    <property type="match status" value="1"/>
</dbReference>
<gene>
    <name evidence="1" type="primary">acpS</name>
    <name type="ordered locus">Erum3430</name>
    <name type="ordered locus">ERWE_CDS_03500</name>
</gene>
<reference key="1">
    <citation type="journal article" date="2005" name="Proc. Natl. Acad. Sci. U.S.A.">
        <title>The genome of the heartwater agent Ehrlichia ruminantium contains multiple tandem repeats of actively variable copy number.</title>
        <authorList>
            <person name="Collins N.E."/>
            <person name="Liebenberg J."/>
            <person name="de Villiers E.P."/>
            <person name="Brayton K.A."/>
            <person name="Louw E."/>
            <person name="Pretorius A."/>
            <person name="Faber F.E."/>
            <person name="van Heerden H."/>
            <person name="Josemans A."/>
            <person name="van Kleef M."/>
            <person name="Steyn H.C."/>
            <person name="van Strijp M.F."/>
            <person name="Zweygarth E."/>
            <person name="Jongejan F."/>
            <person name="Maillard J.C."/>
            <person name="Berthier D."/>
            <person name="Botha M."/>
            <person name="Joubert F."/>
            <person name="Corton C.H."/>
            <person name="Thomson N.R."/>
            <person name="Allsopp M.T."/>
            <person name="Allsopp B.A."/>
        </authorList>
    </citation>
    <scope>NUCLEOTIDE SEQUENCE [LARGE SCALE GENOMIC DNA]</scope>
    <source>
        <strain>Welgevonden</strain>
    </source>
</reference>
<reference key="2">
    <citation type="journal article" date="2006" name="J. Bacteriol.">
        <title>Comparative genomic analysis of three strains of Ehrlichia ruminantium reveals an active process of genome size plasticity.</title>
        <authorList>
            <person name="Frutos R."/>
            <person name="Viari A."/>
            <person name="Ferraz C."/>
            <person name="Morgat A."/>
            <person name="Eychenie S."/>
            <person name="Kandassamy Y."/>
            <person name="Chantal I."/>
            <person name="Bensaid A."/>
            <person name="Coissac E."/>
            <person name="Vachiery N."/>
            <person name="Demaille J."/>
            <person name="Martinez D."/>
        </authorList>
    </citation>
    <scope>NUCLEOTIDE SEQUENCE [LARGE SCALE GENOMIC DNA]</scope>
    <source>
        <strain>Welgevonden</strain>
    </source>
</reference>
<organism>
    <name type="scientific">Ehrlichia ruminantium (strain Welgevonden)</name>
    <dbReference type="NCBI Taxonomy" id="254945"/>
    <lineage>
        <taxon>Bacteria</taxon>
        <taxon>Pseudomonadati</taxon>
        <taxon>Pseudomonadota</taxon>
        <taxon>Alphaproteobacteria</taxon>
        <taxon>Rickettsiales</taxon>
        <taxon>Anaplasmataceae</taxon>
        <taxon>Ehrlichia</taxon>
    </lineage>
</organism>
<proteinExistence type="inferred from homology"/>
<name>ACPS_EHRRW</name>
<protein>
    <recommendedName>
        <fullName evidence="1">Holo-[acyl-carrier-protein] synthase</fullName>
        <shortName evidence="1">Holo-ACP synthase</shortName>
        <ecNumber evidence="1">2.7.8.7</ecNumber>
    </recommendedName>
    <alternativeName>
        <fullName evidence="1">4'-phosphopantetheinyl transferase AcpS</fullName>
    </alternativeName>
</protein>
<accession>Q5HBI7</accession>
<accession>Q5FEC6</accession>
<feature type="chain" id="PRO_0000228287" description="Holo-[acyl-carrier-protein] synthase">
    <location>
        <begin position="1"/>
        <end position="123"/>
    </location>
</feature>
<feature type="binding site" evidence="1">
    <location>
        <position position="8"/>
    </location>
    <ligand>
        <name>Mg(2+)</name>
        <dbReference type="ChEBI" id="CHEBI:18420"/>
    </ligand>
</feature>
<feature type="binding site" evidence="1">
    <location>
        <position position="60"/>
    </location>
    <ligand>
        <name>Mg(2+)</name>
        <dbReference type="ChEBI" id="CHEBI:18420"/>
    </ligand>
</feature>
<comment type="function">
    <text evidence="1">Transfers the 4'-phosphopantetheine moiety from coenzyme A to a Ser of acyl-carrier-protein.</text>
</comment>
<comment type="catalytic activity">
    <reaction evidence="1">
        <text>apo-[ACP] + CoA = holo-[ACP] + adenosine 3',5'-bisphosphate + H(+)</text>
        <dbReference type="Rhea" id="RHEA:12068"/>
        <dbReference type="Rhea" id="RHEA-COMP:9685"/>
        <dbReference type="Rhea" id="RHEA-COMP:9690"/>
        <dbReference type="ChEBI" id="CHEBI:15378"/>
        <dbReference type="ChEBI" id="CHEBI:29999"/>
        <dbReference type="ChEBI" id="CHEBI:57287"/>
        <dbReference type="ChEBI" id="CHEBI:58343"/>
        <dbReference type="ChEBI" id="CHEBI:64479"/>
        <dbReference type="EC" id="2.7.8.7"/>
    </reaction>
</comment>
<comment type="cofactor">
    <cofactor evidence="1">
        <name>Mg(2+)</name>
        <dbReference type="ChEBI" id="CHEBI:18420"/>
    </cofactor>
</comment>
<comment type="subcellular location">
    <subcellularLocation>
        <location evidence="1">Cytoplasm</location>
    </subcellularLocation>
</comment>
<comment type="similarity">
    <text evidence="1">Belongs to the P-Pant transferase superfamily. AcpS family.</text>
</comment>
<evidence type="ECO:0000255" key="1">
    <source>
        <dbReference type="HAMAP-Rule" id="MF_00101"/>
    </source>
</evidence>